<feature type="chain" id="PRO_0000270385" description="Methionine import ATP-binding protein MetN">
    <location>
        <begin position="1"/>
        <end position="343"/>
    </location>
</feature>
<feature type="domain" description="ABC transporter" evidence="1">
    <location>
        <begin position="2"/>
        <end position="241"/>
    </location>
</feature>
<feature type="binding site" evidence="1">
    <location>
        <begin position="38"/>
        <end position="45"/>
    </location>
    <ligand>
        <name>ATP</name>
        <dbReference type="ChEBI" id="CHEBI:30616"/>
    </ligand>
</feature>
<comment type="function">
    <text evidence="1">Part of the ABC transporter complex MetNIQ involved in methionine import. Responsible for energy coupling to the transport system.</text>
</comment>
<comment type="catalytic activity">
    <reaction evidence="1">
        <text>L-methionine(out) + ATP + H2O = L-methionine(in) + ADP + phosphate + H(+)</text>
        <dbReference type="Rhea" id="RHEA:29779"/>
        <dbReference type="ChEBI" id="CHEBI:15377"/>
        <dbReference type="ChEBI" id="CHEBI:15378"/>
        <dbReference type="ChEBI" id="CHEBI:30616"/>
        <dbReference type="ChEBI" id="CHEBI:43474"/>
        <dbReference type="ChEBI" id="CHEBI:57844"/>
        <dbReference type="ChEBI" id="CHEBI:456216"/>
        <dbReference type="EC" id="7.4.2.11"/>
    </reaction>
</comment>
<comment type="catalytic activity">
    <reaction evidence="1">
        <text>D-methionine(out) + ATP + H2O = D-methionine(in) + ADP + phosphate + H(+)</text>
        <dbReference type="Rhea" id="RHEA:29767"/>
        <dbReference type="ChEBI" id="CHEBI:15377"/>
        <dbReference type="ChEBI" id="CHEBI:15378"/>
        <dbReference type="ChEBI" id="CHEBI:30616"/>
        <dbReference type="ChEBI" id="CHEBI:43474"/>
        <dbReference type="ChEBI" id="CHEBI:57932"/>
        <dbReference type="ChEBI" id="CHEBI:456216"/>
        <dbReference type="EC" id="7.4.2.11"/>
    </reaction>
</comment>
<comment type="subunit">
    <text evidence="1">The complex is composed of two ATP-binding proteins (MetN), two transmembrane proteins (MetI) and a solute-binding protein (MetQ).</text>
</comment>
<comment type="subcellular location">
    <subcellularLocation>
        <location evidence="1">Cell inner membrane</location>
        <topology evidence="1">Peripheral membrane protein</topology>
    </subcellularLocation>
</comment>
<comment type="similarity">
    <text evidence="1">Belongs to the ABC transporter superfamily. Methionine importer (TC 3.A.1.24) family.</text>
</comment>
<proteinExistence type="inferred from homology"/>
<protein>
    <recommendedName>
        <fullName evidence="1">Methionine import ATP-binding protein MetN</fullName>
        <ecNumber evidence="1">7.4.2.11</ecNumber>
    </recommendedName>
</protein>
<organism>
    <name type="scientific">Shigella sonnei (strain Ss046)</name>
    <dbReference type="NCBI Taxonomy" id="300269"/>
    <lineage>
        <taxon>Bacteria</taxon>
        <taxon>Pseudomonadati</taxon>
        <taxon>Pseudomonadota</taxon>
        <taxon>Gammaproteobacteria</taxon>
        <taxon>Enterobacterales</taxon>
        <taxon>Enterobacteriaceae</taxon>
        <taxon>Shigella</taxon>
    </lineage>
</organism>
<sequence>MIKLSNITKVFHQGTRTIQALNNVSLHVPAGQIYGVIGASGAGKSTLIRCVNLLERPTEGSVLVDGQELTTLSESELTKARRQIGMIFQHFNLLSSRTVFGNVALPLELDNTPKDEIKRRVTELLSLVGLGDKHDSYPSNLSGGQKQRVAIARALASNPKVLLCDEATSALDPATTRSILELLKDINRRLGLTILLITHEMDVVKRICDCVAVISNGELIEQDTVSEVFSHPKTPLAQKFIQSTLHLDIPEDYQERLQAEPFTDCVPMLRLEFTGQSVDAPLLSETARRFNVNNNIISAQMDYAGGVKFGIMLTEMHGTQQDTQAAIAWLQEHHVKVEVLGYV</sequence>
<evidence type="ECO:0000255" key="1">
    <source>
        <dbReference type="HAMAP-Rule" id="MF_01719"/>
    </source>
</evidence>
<reference key="1">
    <citation type="journal article" date="2005" name="Nucleic Acids Res.">
        <title>Genome dynamics and diversity of Shigella species, the etiologic agents of bacillary dysentery.</title>
        <authorList>
            <person name="Yang F."/>
            <person name="Yang J."/>
            <person name="Zhang X."/>
            <person name="Chen L."/>
            <person name="Jiang Y."/>
            <person name="Yan Y."/>
            <person name="Tang X."/>
            <person name="Wang J."/>
            <person name="Xiong Z."/>
            <person name="Dong J."/>
            <person name="Xue Y."/>
            <person name="Zhu Y."/>
            <person name="Xu X."/>
            <person name="Sun L."/>
            <person name="Chen S."/>
            <person name="Nie H."/>
            <person name="Peng J."/>
            <person name="Xu J."/>
            <person name="Wang Y."/>
            <person name="Yuan Z."/>
            <person name="Wen Y."/>
            <person name="Yao Z."/>
            <person name="Shen Y."/>
            <person name="Qiang B."/>
            <person name="Hou Y."/>
            <person name="Yu J."/>
            <person name="Jin Q."/>
        </authorList>
    </citation>
    <scope>NUCLEOTIDE SEQUENCE [LARGE SCALE GENOMIC DNA]</scope>
    <source>
        <strain>Ss046</strain>
    </source>
</reference>
<name>METN_SHISS</name>
<gene>
    <name evidence="1" type="primary">metN</name>
    <name type="ordered locus">SSON_0213</name>
</gene>
<dbReference type="EC" id="7.4.2.11" evidence="1"/>
<dbReference type="EMBL" id="CP000038">
    <property type="protein sequence ID" value="AAZ87004.1"/>
    <property type="molecule type" value="Genomic_DNA"/>
</dbReference>
<dbReference type="RefSeq" id="WP_000593994.1">
    <property type="nucleotide sequence ID" value="NC_007384.1"/>
</dbReference>
<dbReference type="SMR" id="Q3Z5F8"/>
<dbReference type="GeneID" id="93777224"/>
<dbReference type="KEGG" id="ssn:SSON_0213"/>
<dbReference type="HOGENOM" id="CLU_000604_1_3_6"/>
<dbReference type="Proteomes" id="UP000002529">
    <property type="component" value="Chromosome"/>
</dbReference>
<dbReference type="GO" id="GO:0009276">
    <property type="term" value="C:Gram-negative-bacterium-type cell wall"/>
    <property type="evidence" value="ECO:0007669"/>
    <property type="project" value="InterPro"/>
</dbReference>
<dbReference type="GO" id="GO:0005886">
    <property type="term" value="C:plasma membrane"/>
    <property type="evidence" value="ECO:0007669"/>
    <property type="project" value="UniProtKB-SubCell"/>
</dbReference>
<dbReference type="GO" id="GO:0033232">
    <property type="term" value="F:ABC-type D-methionine transporter activity"/>
    <property type="evidence" value="ECO:0007669"/>
    <property type="project" value="UniProtKB-EC"/>
</dbReference>
<dbReference type="GO" id="GO:0005524">
    <property type="term" value="F:ATP binding"/>
    <property type="evidence" value="ECO:0007669"/>
    <property type="project" value="UniProtKB-KW"/>
</dbReference>
<dbReference type="GO" id="GO:0016887">
    <property type="term" value="F:ATP hydrolysis activity"/>
    <property type="evidence" value="ECO:0007669"/>
    <property type="project" value="InterPro"/>
</dbReference>
<dbReference type="CDD" id="cd03258">
    <property type="entry name" value="ABC_MetN_methionine_transporter"/>
    <property type="match status" value="1"/>
</dbReference>
<dbReference type="FunFam" id="3.30.70.260:FF:000014">
    <property type="entry name" value="Methionine import ATP-binding protein MetN"/>
    <property type="match status" value="1"/>
</dbReference>
<dbReference type="FunFam" id="3.40.50.300:FF:000233">
    <property type="entry name" value="Methionine import ATP-binding protein MetN"/>
    <property type="match status" value="1"/>
</dbReference>
<dbReference type="Gene3D" id="3.30.70.260">
    <property type="match status" value="1"/>
</dbReference>
<dbReference type="Gene3D" id="3.40.50.300">
    <property type="entry name" value="P-loop containing nucleotide triphosphate hydrolases"/>
    <property type="match status" value="1"/>
</dbReference>
<dbReference type="InterPro" id="IPR003593">
    <property type="entry name" value="AAA+_ATPase"/>
</dbReference>
<dbReference type="InterPro" id="IPR012692">
    <property type="entry name" value="ABC_MetN_proteobac"/>
</dbReference>
<dbReference type="InterPro" id="IPR003439">
    <property type="entry name" value="ABC_transporter-like_ATP-bd"/>
</dbReference>
<dbReference type="InterPro" id="IPR017871">
    <property type="entry name" value="ABC_transporter-like_CS"/>
</dbReference>
<dbReference type="InterPro" id="IPR045865">
    <property type="entry name" value="ACT-like_dom_sf"/>
</dbReference>
<dbReference type="InterPro" id="IPR041701">
    <property type="entry name" value="MetN_ABC"/>
</dbReference>
<dbReference type="InterPro" id="IPR050086">
    <property type="entry name" value="MetN_ABC_transporter-like"/>
</dbReference>
<dbReference type="InterPro" id="IPR018449">
    <property type="entry name" value="NIL_domain"/>
</dbReference>
<dbReference type="InterPro" id="IPR027417">
    <property type="entry name" value="P-loop_NTPase"/>
</dbReference>
<dbReference type="NCBIfam" id="TIGR02314">
    <property type="entry name" value="ABC_MetN"/>
    <property type="match status" value="1"/>
</dbReference>
<dbReference type="PANTHER" id="PTHR43166">
    <property type="entry name" value="AMINO ACID IMPORT ATP-BINDING PROTEIN"/>
    <property type="match status" value="1"/>
</dbReference>
<dbReference type="PANTHER" id="PTHR43166:SF30">
    <property type="entry name" value="METHIONINE IMPORT ATP-BINDING PROTEIN METN"/>
    <property type="match status" value="1"/>
</dbReference>
<dbReference type="Pfam" id="PF00005">
    <property type="entry name" value="ABC_tran"/>
    <property type="match status" value="1"/>
</dbReference>
<dbReference type="Pfam" id="PF09383">
    <property type="entry name" value="NIL"/>
    <property type="match status" value="1"/>
</dbReference>
<dbReference type="SMART" id="SM00382">
    <property type="entry name" value="AAA"/>
    <property type="match status" value="1"/>
</dbReference>
<dbReference type="SMART" id="SM00930">
    <property type="entry name" value="NIL"/>
    <property type="match status" value="1"/>
</dbReference>
<dbReference type="SUPFAM" id="SSF55021">
    <property type="entry name" value="ACT-like"/>
    <property type="match status" value="1"/>
</dbReference>
<dbReference type="SUPFAM" id="SSF52540">
    <property type="entry name" value="P-loop containing nucleoside triphosphate hydrolases"/>
    <property type="match status" value="1"/>
</dbReference>
<dbReference type="PROSITE" id="PS00211">
    <property type="entry name" value="ABC_TRANSPORTER_1"/>
    <property type="match status" value="1"/>
</dbReference>
<dbReference type="PROSITE" id="PS50893">
    <property type="entry name" value="ABC_TRANSPORTER_2"/>
    <property type="match status" value="1"/>
</dbReference>
<dbReference type="PROSITE" id="PS51264">
    <property type="entry name" value="METN"/>
    <property type="match status" value="1"/>
</dbReference>
<accession>Q3Z5F8</accession>
<keyword id="KW-0029">Amino-acid transport</keyword>
<keyword id="KW-0067">ATP-binding</keyword>
<keyword id="KW-0997">Cell inner membrane</keyword>
<keyword id="KW-1003">Cell membrane</keyword>
<keyword id="KW-0472">Membrane</keyword>
<keyword id="KW-0547">Nucleotide-binding</keyword>
<keyword id="KW-1185">Reference proteome</keyword>
<keyword id="KW-1278">Translocase</keyword>
<keyword id="KW-0813">Transport</keyword>